<gene>
    <name type="primary">pcs1</name>
    <name type="ORF">SPAC11E3.03</name>
</gene>
<accession>O13684</accession>
<accession>Q870L5</accession>
<accession>Q9UTP7</accession>
<name>PCS1_SCHPO</name>
<proteinExistence type="evidence at protein level"/>
<comment type="function">
    <text evidence="3 4">The monopolin-like pcs1/mde4 complex is essential for accurate chromosome segregation during mitosis and meiosis II. May clamp together microtubule binding sites on the same kinetochore, preventing merotelic attachment of microtubules. In contrast to its S.cerevisiae ortholog CSM1, is not required ofr mono-orientation during meiosis I.</text>
</comment>
<comment type="subunit">
    <text>Component of a monopolin-like complex composed of pcs1 and mde4. The complex associates with the kinetochore.</text>
</comment>
<comment type="interaction">
    <interactant intactId="EBI-2211100">
        <id>O13684</id>
    </interactant>
    <interactant intactId="EBI-2211118">
        <id>O43068</id>
        <label>mde4</label>
    </interactant>
    <organismsDiffer>false</organismsDiffer>
    <experiments>3</experiments>
</comment>
<comment type="subcellular location">
    <subcellularLocation>
        <location evidence="3">Nucleus</location>
        <location evidence="3">Nucleolus</location>
    </subcellularLocation>
    <subcellularLocation>
        <location evidence="3">Chromosome</location>
        <location evidence="3">Centromere</location>
    </subcellularLocation>
    <text>Nucleolar during G2 (PubMed:12689592). Localizes to the centromeres throughout most stages of vegetative growth and meiotic development apart from the horse tail stage of prophase I (PubMed:12689592). Localizes to the central core of the centromere (PubMed:17627824).</text>
</comment>
<keyword id="KW-0131">Cell cycle</keyword>
<keyword id="KW-0132">Cell division</keyword>
<keyword id="KW-0137">Centromere</keyword>
<keyword id="KW-0158">Chromosome</keyword>
<keyword id="KW-0175">Coiled coil</keyword>
<keyword id="KW-0469">Meiosis</keyword>
<keyword id="KW-0498">Mitosis</keyword>
<keyword id="KW-0539">Nucleus</keyword>
<keyword id="KW-1185">Reference proteome</keyword>
<organism>
    <name type="scientific">Schizosaccharomyces pombe (strain 972 / ATCC 24843)</name>
    <name type="common">Fission yeast</name>
    <dbReference type="NCBI Taxonomy" id="284812"/>
    <lineage>
        <taxon>Eukaryota</taxon>
        <taxon>Fungi</taxon>
        <taxon>Dikarya</taxon>
        <taxon>Ascomycota</taxon>
        <taxon>Taphrinomycotina</taxon>
        <taxon>Schizosaccharomycetes</taxon>
        <taxon>Schizosaccharomycetales</taxon>
        <taxon>Schizosaccharomycetaceae</taxon>
        <taxon>Schizosaccharomyces</taxon>
    </lineage>
</organism>
<reference key="1">
    <citation type="journal article" date="2002" name="Nature">
        <title>The genome sequence of Schizosaccharomyces pombe.</title>
        <authorList>
            <person name="Wood V."/>
            <person name="Gwilliam R."/>
            <person name="Rajandream M.A."/>
            <person name="Lyne M.H."/>
            <person name="Lyne R."/>
            <person name="Stewart A."/>
            <person name="Sgouros J.G."/>
            <person name="Peat N."/>
            <person name="Hayles J."/>
            <person name="Baker S.G."/>
            <person name="Basham D."/>
            <person name="Bowman S."/>
            <person name="Brooks K."/>
            <person name="Brown D."/>
            <person name="Brown S."/>
            <person name="Chillingworth T."/>
            <person name="Churcher C.M."/>
            <person name="Collins M."/>
            <person name="Connor R."/>
            <person name="Cronin A."/>
            <person name="Davis P."/>
            <person name="Feltwell T."/>
            <person name="Fraser A."/>
            <person name="Gentles S."/>
            <person name="Goble A."/>
            <person name="Hamlin N."/>
            <person name="Harris D.E."/>
            <person name="Hidalgo J."/>
            <person name="Hodgson G."/>
            <person name="Holroyd S."/>
            <person name="Hornsby T."/>
            <person name="Howarth S."/>
            <person name="Huckle E.J."/>
            <person name="Hunt S."/>
            <person name="Jagels K."/>
            <person name="James K.D."/>
            <person name="Jones L."/>
            <person name="Jones M."/>
            <person name="Leather S."/>
            <person name="McDonald S."/>
            <person name="McLean J."/>
            <person name="Mooney P."/>
            <person name="Moule S."/>
            <person name="Mungall K.L."/>
            <person name="Murphy L.D."/>
            <person name="Niblett D."/>
            <person name="Odell C."/>
            <person name="Oliver K."/>
            <person name="O'Neil S."/>
            <person name="Pearson D."/>
            <person name="Quail M.A."/>
            <person name="Rabbinowitsch E."/>
            <person name="Rutherford K.M."/>
            <person name="Rutter S."/>
            <person name="Saunders D."/>
            <person name="Seeger K."/>
            <person name="Sharp S."/>
            <person name="Skelton J."/>
            <person name="Simmonds M.N."/>
            <person name="Squares R."/>
            <person name="Squares S."/>
            <person name="Stevens K."/>
            <person name="Taylor K."/>
            <person name="Taylor R.G."/>
            <person name="Tivey A."/>
            <person name="Walsh S.V."/>
            <person name="Warren T."/>
            <person name="Whitehead S."/>
            <person name="Woodward J.R."/>
            <person name="Volckaert G."/>
            <person name="Aert R."/>
            <person name="Robben J."/>
            <person name="Grymonprez B."/>
            <person name="Weltjens I."/>
            <person name="Vanstreels E."/>
            <person name="Rieger M."/>
            <person name="Schaefer M."/>
            <person name="Mueller-Auer S."/>
            <person name="Gabel C."/>
            <person name="Fuchs M."/>
            <person name="Duesterhoeft A."/>
            <person name="Fritzc C."/>
            <person name="Holzer E."/>
            <person name="Moestl D."/>
            <person name="Hilbert H."/>
            <person name="Borzym K."/>
            <person name="Langer I."/>
            <person name="Beck A."/>
            <person name="Lehrach H."/>
            <person name="Reinhardt R."/>
            <person name="Pohl T.M."/>
            <person name="Eger P."/>
            <person name="Zimmermann W."/>
            <person name="Wedler H."/>
            <person name="Wambutt R."/>
            <person name="Purnelle B."/>
            <person name="Goffeau A."/>
            <person name="Cadieu E."/>
            <person name="Dreano S."/>
            <person name="Gloux S."/>
            <person name="Lelaure V."/>
            <person name="Mottier S."/>
            <person name="Galibert F."/>
            <person name="Aves S.J."/>
            <person name="Xiang Z."/>
            <person name="Hunt C."/>
            <person name="Moore K."/>
            <person name="Hurst S.M."/>
            <person name="Lucas M."/>
            <person name="Rochet M."/>
            <person name="Gaillardin C."/>
            <person name="Tallada V.A."/>
            <person name="Garzon A."/>
            <person name="Thode G."/>
            <person name="Daga R.R."/>
            <person name="Cruzado L."/>
            <person name="Jimenez J."/>
            <person name="Sanchez M."/>
            <person name="del Rey F."/>
            <person name="Benito J."/>
            <person name="Dominguez A."/>
            <person name="Revuelta J.L."/>
            <person name="Moreno S."/>
            <person name="Armstrong J."/>
            <person name="Forsburg S.L."/>
            <person name="Cerutti L."/>
            <person name="Lowe T."/>
            <person name="McCombie W.R."/>
            <person name="Paulsen I."/>
            <person name="Potashkin J."/>
            <person name="Shpakovski G.V."/>
            <person name="Ussery D."/>
            <person name="Barrell B.G."/>
            <person name="Nurse P."/>
        </authorList>
    </citation>
    <scope>NUCLEOTIDE SEQUENCE [LARGE SCALE GENOMIC DNA]</scope>
    <source>
        <strain>972 / ATCC 24843</strain>
    </source>
</reference>
<reference key="2">
    <citation type="journal article" date="2011" name="Science">
        <title>Comparative functional genomics of the fission yeasts.</title>
        <authorList>
            <person name="Rhind N."/>
            <person name="Chen Z."/>
            <person name="Yassour M."/>
            <person name="Thompson D.A."/>
            <person name="Haas B.J."/>
            <person name="Habib N."/>
            <person name="Wapinski I."/>
            <person name="Roy S."/>
            <person name="Lin M.F."/>
            <person name="Heiman D.I."/>
            <person name="Young S.K."/>
            <person name="Furuya K."/>
            <person name="Guo Y."/>
            <person name="Pidoux A."/>
            <person name="Chen H.M."/>
            <person name="Robbertse B."/>
            <person name="Goldberg J.M."/>
            <person name="Aoki K."/>
            <person name="Bayne E.H."/>
            <person name="Berlin A.M."/>
            <person name="Desjardins C.A."/>
            <person name="Dobbs E."/>
            <person name="Dukaj L."/>
            <person name="Fan L."/>
            <person name="FitzGerald M.G."/>
            <person name="French C."/>
            <person name="Gujja S."/>
            <person name="Hansen K."/>
            <person name="Keifenheim D."/>
            <person name="Levin J.Z."/>
            <person name="Mosher R.A."/>
            <person name="Mueller C.A."/>
            <person name="Pfiffner J."/>
            <person name="Priest M."/>
            <person name="Russ C."/>
            <person name="Smialowska A."/>
            <person name="Swoboda P."/>
            <person name="Sykes S.M."/>
            <person name="Vaughn M."/>
            <person name="Vengrova S."/>
            <person name="Yoder R."/>
            <person name="Zeng Q."/>
            <person name="Allshire R."/>
            <person name="Baulcombe D."/>
            <person name="Birren B.W."/>
            <person name="Brown W."/>
            <person name="Ekwall K."/>
            <person name="Kellis M."/>
            <person name="Leatherwood J."/>
            <person name="Levin H."/>
            <person name="Margalit H."/>
            <person name="Martienssen R."/>
            <person name="Nieduszynski C.A."/>
            <person name="Spatafora J.W."/>
            <person name="Friedman N."/>
            <person name="Dalgaard J.Z."/>
            <person name="Baumann P."/>
            <person name="Niki H."/>
            <person name="Regev A."/>
            <person name="Nusbaum C."/>
        </authorList>
    </citation>
    <scope>REVISION OF GENE MODEL</scope>
</reference>
<reference key="3">
    <citation type="journal article" date="2003" name="Dev. Cell">
        <title>Kinetochore recruitment of two nucleolar proteins is required for homolog segregation in meiosis I.</title>
        <authorList>
            <person name="Rabitsch K.P."/>
            <person name="Petronczki M."/>
            <person name="Javerzat J.-P."/>
            <person name="Genier S."/>
            <person name="Chwalla B."/>
            <person name="Schleiffer A."/>
            <person name="Tanaka T.U."/>
            <person name="Nasmyth K."/>
        </authorList>
    </citation>
    <scope>FUNCTION</scope>
    <scope>SUBCELLULAR LOCATION</scope>
</reference>
<reference key="4">
    <citation type="journal article" date="2007" name="Curr. Biol.">
        <title>The kinetochore proteins Pcs1 and Mde4 and heterochromatin are required to prevent merotelic orientation.</title>
        <authorList>
            <person name="Gregan J."/>
            <person name="Riedel C.G."/>
            <person name="Pidoux A.L."/>
            <person name="Katou Y."/>
            <person name="Rumpf C."/>
            <person name="Schleiffer A."/>
            <person name="Kearsey S.E."/>
            <person name="Shirahige K."/>
            <person name="Allshire R.C."/>
            <person name="Nasmyth K."/>
        </authorList>
    </citation>
    <scope>FUNCTION</scope>
    <scope>INTERACTION WITH MDE4</scope>
    <scope>SUBCELLULAR LOCATION</scope>
</reference>
<protein>
    <recommendedName>
        <fullName>Monopolin complex subunit pcs1</fullName>
    </recommendedName>
    <alternativeName>
        <fullName>Chromosome segregation protein 1</fullName>
    </alternativeName>
</protein>
<dbReference type="EMBL" id="CU329670">
    <property type="protein sequence ID" value="CAD88639.2"/>
    <property type="molecule type" value="Genomic_DNA"/>
</dbReference>
<dbReference type="PIR" id="T37530">
    <property type="entry name" value="T37530"/>
</dbReference>
<dbReference type="PIR" id="T37531">
    <property type="entry name" value="T37531"/>
</dbReference>
<dbReference type="RefSeq" id="NP_001018298.2">
    <property type="nucleotide sequence ID" value="NM_001020359.2"/>
</dbReference>
<dbReference type="SMR" id="O13684"/>
<dbReference type="BioGRID" id="280638">
    <property type="interactions" value="10"/>
</dbReference>
<dbReference type="DIP" id="DIP-47341N"/>
<dbReference type="FunCoup" id="O13684">
    <property type="interactions" value="7"/>
</dbReference>
<dbReference type="IntAct" id="O13684">
    <property type="interactions" value="7"/>
</dbReference>
<dbReference type="STRING" id="284812.O13684"/>
<dbReference type="iPTMnet" id="O13684"/>
<dbReference type="PaxDb" id="4896-SPAC11E3.03.1"/>
<dbReference type="EnsemblFungi" id="SPAC11E3.03.1">
    <property type="protein sequence ID" value="SPAC11E3.03.1:pep"/>
    <property type="gene ID" value="SPAC11E3.03"/>
</dbReference>
<dbReference type="GeneID" id="3361562"/>
<dbReference type="KEGG" id="spo:3361562"/>
<dbReference type="PomBase" id="SPAC11E3.03"/>
<dbReference type="VEuPathDB" id="FungiDB:SPAC11E3.03"/>
<dbReference type="eggNOG" id="ENOG502R6WM">
    <property type="taxonomic scope" value="Eukaryota"/>
</dbReference>
<dbReference type="HOGENOM" id="CLU_093249_0_0_1"/>
<dbReference type="InParanoid" id="O13684"/>
<dbReference type="OMA" id="RYTCRNT"/>
<dbReference type="PRO" id="PR:O13684"/>
<dbReference type="Proteomes" id="UP000002485">
    <property type="component" value="Chromosome I"/>
</dbReference>
<dbReference type="GO" id="GO:0034506">
    <property type="term" value="C:chromosome, centromeric core domain"/>
    <property type="evidence" value="ECO:0000314"/>
    <property type="project" value="PomBase"/>
</dbReference>
<dbReference type="GO" id="GO:0000775">
    <property type="term" value="C:chromosome, centromeric region"/>
    <property type="evidence" value="ECO:0000314"/>
    <property type="project" value="PomBase"/>
</dbReference>
<dbReference type="GO" id="GO:0005829">
    <property type="term" value="C:cytosol"/>
    <property type="evidence" value="ECO:0007005"/>
    <property type="project" value="PomBase"/>
</dbReference>
<dbReference type="GO" id="GO:0000776">
    <property type="term" value="C:kinetochore"/>
    <property type="evidence" value="ECO:0000314"/>
    <property type="project" value="PomBase"/>
</dbReference>
<dbReference type="GO" id="GO:0072686">
    <property type="term" value="C:mitotic spindle"/>
    <property type="evidence" value="ECO:0000314"/>
    <property type="project" value="PomBase"/>
</dbReference>
<dbReference type="GO" id="GO:0033551">
    <property type="term" value="C:monopolin complex"/>
    <property type="evidence" value="ECO:0000314"/>
    <property type="project" value="PomBase"/>
</dbReference>
<dbReference type="GO" id="GO:0005730">
    <property type="term" value="C:nucleolus"/>
    <property type="evidence" value="ECO:0000314"/>
    <property type="project" value="PomBase"/>
</dbReference>
<dbReference type="GO" id="GO:0005634">
    <property type="term" value="C:nucleus"/>
    <property type="evidence" value="ECO:0000314"/>
    <property type="project" value="PomBase"/>
</dbReference>
<dbReference type="GO" id="GO:1990644">
    <property type="term" value="F:microtubule site clamp"/>
    <property type="evidence" value="ECO:0000353"/>
    <property type="project" value="PomBase"/>
</dbReference>
<dbReference type="GO" id="GO:0051315">
    <property type="term" value="P:attachment of mitotic spindle microtubules to kinetochore"/>
    <property type="evidence" value="ECO:0000315"/>
    <property type="project" value="PomBase"/>
</dbReference>
<dbReference type="GO" id="GO:0051301">
    <property type="term" value="P:cell division"/>
    <property type="evidence" value="ECO:0007669"/>
    <property type="project" value="UniProtKB-KW"/>
</dbReference>
<dbReference type="GO" id="GO:0045144">
    <property type="term" value="P:meiotic sister chromatid segregation"/>
    <property type="evidence" value="ECO:0000315"/>
    <property type="project" value="PomBase"/>
</dbReference>
<dbReference type="GO" id="GO:1990893">
    <property type="term" value="P:mitotic chromosome centromere condensation"/>
    <property type="evidence" value="ECO:0000315"/>
    <property type="project" value="PomBase"/>
</dbReference>
<dbReference type="GO" id="GO:0000070">
    <property type="term" value="P:mitotic sister chromatid segregation"/>
    <property type="evidence" value="ECO:0000315"/>
    <property type="project" value="PomBase"/>
</dbReference>
<dbReference type="CDD" id="cd23787">
    <property type="entry name" value="RWD_CSM1"/>
    <property type="match status" value="1"/>
</dbReference>
<dbReference type="Gene3D" id="3.90.1150.80">
    <property type="match status" value="1"/>
</dbReference>
<dbReference type="InterPro" id="IPR040349">
    <property type="entry name" value="Csm1/Pcs1"/>
</dbReference>
<dbReference type="InterPro" id="IPR020981">
    <property type="entry name" value="Csm1/Pcs1_C"/>
</dbReference>
<dbReference type="InterPro" id="IPR038608">
    <property type="entry name" value="Csm1/Pcs1_C_sf"/>
</dbReference>
<dbReference type="PANTHER" id="PTHR28006">
    <property type="entry name" value="MONOPOLIN COMPLEX SUBUNIT CSM1"/>
    <property type="match status" value="1"/>
</dbReference>
<dbReference type="PANTHER" id="PTHR28006:SF1">
    <property type="entry name" value="MONOPOLIN COMPLEX SUBUNIT CSM1"/>
    <property type="match status" value="1"/>
</dbReference>
<dbReference type="Pfam" id="PF12539">
    <property type="entry name" value="Csm1"/>
    <property type="match status" value="1"/>
</dbReference>
<feature type="chain" id="PRO_0000058266" description="Monopolin complex subunit pcs1">
    <location>
        <begin position="1"/>
        <end position="261"/>
    </location>
</feature>
<feature type="region of interest" description="Disordered" evidence="2">
    <location>
        <begin position="1"/>
        <end position="42"/>
    </location>
</feature>
<feature type="coiled-coil region" evidence="1">
    <location>
        <begin position="91"/>
        <end position="170"/>
    </location>
</feature>
<feature type="compositionally biased region" description="Basic and acidic residues" evidence="2">
    <location>
        <begin position="10"/>
        <end position="19"/>
    </location>
</feature>
<feature type="compositionally biased region" description="Basic residues" evidence="2">
    <location>
        <begin position="21"/>
        <end position="34"/>
    </location>
</feature>
<sequence length="261" mass="30418">MRKNNMQTSKDSELKEQAKGKSSKLIHKLPKQRTRISQGQMHSTQDFVNNEDQDAYSVRENENELHINNSGMSELNKKLQLPNVELSTLSHTQEQEFNELNKLIRKINELQEFYLLEDLAKPVTNAGADADDTIVKDLKKELENEKKANHSLKNELLKTREQIKNYSKINILIKELFGLEVADCIEDEDGYRFNCKNTGRRGTLEYQLLLDDQNFTFTPRLNVQTDEELMKHLPDYLLEEIIFTKEQGKLFSARLMKALQD</sequence>
<evidence type="ECO:0000255" key="1"/>
<evidence type="ECO:0000256" key="2">
    <source>
        <dbReference type="SAM" id="MobiDB-lite"/>
    </source>
</evidence>
<evidence type="ECO:0000269" key="3">
    <source>
    </source>
</evidence>
<evidence type="ECO:0000269" key="4">
    <source>
    </source>
</evidence>